<accession>Q6EYJ5</accession>
<comment type="function">
    <text evidence="1">Found at the monomer-monomer interface of the photosystem II (PS II) dimer, plays a role in assembly and dimerization of PSII. PSII is a light-driven water plastoquinone oxidoreductase, using light energy to abstract electrons from H(2)O, generating a proton gradient subsequently used for ATP formation.</text>
</comment>
<comment type="subunit">
    <text evidence="1">PSII is composed of 1 copy each of membrane proteins PsbA, PsbB, PsbC, PsbD, PsbE, PsbF, PsbH, PsbI, PsbJ, PsbK, PsbL, PsbM, PsbT, PsbY, PsbZ, Psb30/Ycf12, at least 3 peripheral proteins of the oxygen-evolving complex and a large number of cofactors. It forms dimeric complexes.</text>
</comment>
<comment type="subcellular location">
    <subcellularLocation>
        <location evidence="1">Plastid</location>
        <location evidence="1">Chloroplast thylakoid membrane</location>
        <topology evidence="1">Single-pass membrane protein</topology>
    </subcellularLocation>
</comment>
<comment type="similarity">
    <text evidence="1">Belongs to the PsbT family.</text>
</comment>
<name>PSBT_CUNLA</name>
<sequence length="35" mass="3986">MEALVYTFLLXSTLGIIFFAIFFREPPKVPDRGGK</sequence>
<proteinExistence type="inferred from homology"/>
<protein>
    <recommendedName>
        <fullName evidence="1">Photosystem II reaction center protein T</fullName>
        <shortName evidence="1">PSII-T</shortName>
    </recommendedName>
</protein>
<evidence type="ECO:0000255" key="1">
    <source>
        <dbReference type="HAMAP-Rule" id="MF_00808"/>
    </source>
</evidence>
<geneLocation type="chloroplast"/>
<keyword id="KW-0150">Chloroplast</keyword>
<keyword id="KW-0472">Membrane</keyword>
<keyword id="KW-0602">Photosynthesis</keyword>
<keyword id="KW-0604">Photosystem II</keyword>
<keyword id="KW-0934">Plastid</keyword>
<keyword id="KW-0793">Thylakoid</keyword>
<keyword id="KW-0812">Transmembrane</keyword>
<keyword id="KW-1133">Transmembrane helix</keyword>
<dbReference type="EMBL" id="AF528898">
    <property type="protein sequence ID" value="AAQ09378.2"/>
    <property type="molecule type" value="Genomic_DNA"/>
</dbReference>
<dbReference type="GO" id="GO:0009535">
    <property type="term" value="C:chloroplast thylakoid membrane"/>
    <property type="evidence" value="ECO:0007669"/>
    <property type="project" value="UniProtKB-SubCell"/>
</dbReference>
<dbReference type="GO" id="GO:0009539">
    <property type="term" value="C:photosystem II reaction center"/>
    <property type="evidence" value="ECO:0007669"/>
    <property type="project" value="InterPro"/>
</dbReference>
<dbReference type="GO" id="GO:0015979">
    <property type="term" value="P:photosynthesis"/>
    <property type="evidence" value="ECO:0007669"/>
    <property type="project" value="UniProtKB-UniRule"/>
</dbReference>
<dbReference type="HAMAP" id="MF_00808">
    <property type="entry name" value="PSII_PsbT"/>
    <property type="match status" value="1"/>
</dbReference>
<dbReference type="InterPro" id="IPR001743">
    <property type="entry name" value="PSII_PsbT"/>
</dbReference>
<dbReference type="InterPro" id="IPR037268">
    <property type="entry name" value="PSII_PsbT_sf"/>
</dbReference>
<dbReference type="PANTHER" id="PTHR36411">
    <property type="match status" value="1"/>
</dbReference>
<dbReference type="PANTHER" id="PTHR36411:SF2">
    <property type="entry name" value="PHOTOSYSTEM II REACTION CENTER PROTEIN T"/>
    <property type="match status" value="1"/>
</dbReference>
<dbReference type="Pfam" id="PF01405">
    <property type="entry name" value="PsbT"/>
    <property type="match status" value="1"/>
</dbReference>
<dbReference type="SUPFAM" id="SSF161029">
    <property type="entry name" value="Photosystem II reaction center protein T, PsbT"/>
    <property type="match status" value="1"/>
</dbReference>
<gene>
    <name evidence="1" type="primary">psbT</name>
</gene>
<feature type="chain" id="PRO_0000217922" description="Photosystem II reaction center protein T">
    <location>
        <begin position="1"/>
        <end position="35"/>
    </location>
</feature>
<feature type="transmembrane region" description="Helical" evidence="1">
    <location>
        <begin position="3"/>
        <end position="23"/>
    </location>
</feature>
<reference key="1">
    <citation type="submission" date="2002-07" db="EMBL/GenBank/DDBJ databases">
        <title>Parsing out signal and noise for seed-plant phylogenetic inference.</title>
        <authorList>
            <person name="Graham S.W."/>
            <person name="Rai H.S."/>
            <person name="Ikegami K."/>
            <person name="Reeves P.A."/>
            <person name="Olmstead R.G."/>
        </authorList>
    </citation>
    <scope>NUCLEOTIDE SEQUENCE [GENOMIC DNA]</scope>
</reference>
<organism>
    <name type="scientific">Cunninghamia lanceolata</name>
    <name type="common">China fir</name>
    <name type="synonym">Pinus lanceolata</name>
    <dbReference type="NCBI Taxonomy" id="28977"/>
    <lineage>
        <taxon>Eukaryota</taxon>
        <taxon>Viridiplantae</taxon>
        <taxon>Streptophyta</taxon>
        <taxon>Embryophyta</taxon>
        <taxon>Tracheophyta</taxon>
        <taxon>Spermatophyta</taxon>
        <taxon>Pinopsida</taxon>
        <taxon>Pinidae</taxon>
        <taxon>Conifers II</taxon>
        <taxon>Cupressales</taxon>
        <taxon>Cupressaceae</taxon>
        <taxon>Cunninghamia</taxon>
    </lineage>
</organism>